<keyword id="KW-0488">Methylation</keyword>
<keyword id="KW-0687">Ribonucleoprotein</keyword>
<keyword id="KW-0689">Ribosomal protein</keyword>
<keyword id="KW-0694">RNA-binding</keyword>
<keyword id="KW-0699">rRNA-binding</keyword>
<dbReference type="EMBL" id="CP000024">
    <property type="protein sequence ID" value="AAV63334.1"/>
    <property type="molecule type" value="Genomic_DNA"/>
</dbReference>
<dbReference type="RefSeq" id="WP_002953535.1">
    <property type="nucleotide sequence ID" value="NC_006449.1"/>
</dbReference>
<dbReference type="SMR" id="Q5LXZ5"/>
<dbReference type="GeneID" id="66899554"/>
<dbReference type="KEGG" id="stc:str1818"/>
<dbReference type="HOGENOM" id="CLU_074237_2_1_9"/>
<dbReference type="GO" id="GO:0022625">
    <property type="term" value="C:cytosolic large ribosomal subunit"/>
    <property type="evidence" value="ECO:0007669"/>
    <property type="project" value="TreeGrafter"/>
</dbReference>
<dbReference type="GO" id="GO:0070180">
    <property type="term" value="F:large ribosomal subunit rRNA binding"/>
    <property type="evidence" value="ECO:0007669"/>
    <property type="project" value="UniProtKB-UniRule"/>
</dbReference>
<dbReference type="GO" id="GO:0003735">
    <property type="term" value="F:structural constituent of ribosome"/>
    <property type="evidence" value="ECO:0007669"/>
    <property type="project" value="InterPro"/>
</dbReference>
<dbReference type="GO" id="GO:0006412">
    <property type="term" value="P:translation"/>
    <property type="evidence" value="ECO:0007669"/>
    <property type="project" value="UniProtKB-UniRule"/>
</dbReference>
<dbReference type="CDD" id="cd00349">
    <property type="entry name" value="Ribosomal_L11"/>
    <property type="match status" value="1"/>
</dbReference>
<dbReference type="FunFam" id="1.10.10.250:FF:000001">
    <property type="entry name" value="50S ribosomal protein L11"/>
    <property type="match status" value="1"/>
</dbReference>
<dbReference type="FunFam" id="3.30.1550.10:FF:000001">
    <property type="entry name" value="50S ribosomal protein L11"/>
    <property type="match status" value="1"/>
</dbReference>
<dbReference type="Gene3D" id="1.10.10.250">
    <property type="entry name" value="Ribosomal protein L11, C-terminal domain"/>
    <property type="match status" value="1"/>
</dbReference>
<dbReference type="Gene3D" id="3.30.1550.10">
    <property type="entry name" value="Ribosomal protein L11/L12, N-terminal domain"/>
    <property type="match status" value="1"/>
</dbReference>
<dbReference type="HAMAP" id="MF_00736">
    <property type="entry name" value="Ribosomal_uL11"/>
    <property type="match status" value="1"/>
</dbReference>
<dbReference type="InterPro" id="IPR000911">
    <property type="entry name" value="Ribosomal_uL11"/>
</dbReference>
<dbReference type="InterPro" id="IPR006519">
    <property type="entry name" value="Ribosomal_uL11_bac-typ"/>
</dbReference>
<dbReference type="InterPro" id="IPR020783">
    <property type="entry name" value="Ribosomal_uL11_C"/>
</dbReference>
<dbReference type="InterPro" id="IPR036769">
    <property type="entry name" value="Ribosomal_uL11_C_sf"/>
</dbReference>
<dbReference type="InterPro" id="IPR020785">
    <property type="entry name" value="Ribosomal_uL11_CS"/>
</dbReference>
<dbReference type="InterPro" id="IPR020784">
    <property type="entry name" value="Ribosomal_uL11_N"/>
</dbReference>
<dbReference type="InterPro" id="IPR036796">
    <property type="entry name" value="Ribosomal_uL11_N_sf"/>
</dbReference>
<dbReference type="NCBIfam" id="TIGR01632">
    <property type="entry name" value="L11_bact"/>
    <property type="match status" value="1"/>
</dbReference>
<dbReference type="PANTHER" id="PTHR11661">
    <property type="entry name" value="60S RIBOSOMAL PROTEIN L12"/>
    <property type="match status" value="1"/>
</dbReference>
<dbReference type="PANTHER" id="PTHR11661:SF1">
    <property type="entry name" value="LARGE RIBOSOMAL SUBUNIT PROTEIN UL11M"/>
    <property type="match status" value="1"/>
</dbReference>
<dbReference type="Pfam" id="PF00298">
    <property type="entry name" value="Ribosomal_L11"/>
    <property type="match status" value="1"/>
</dbReference>
<dbReference type="Pfam" id="PF03946">
    <property type="entry name" value="Ribosomal_L11_N"/>
    <property type="match status" value="1"/>
</dbReference>
<dbReference type="SMART" id="SM00649">
    <property type="entry name" value="RL11"/>
    <property type="match status" value="1"/>
</dbReference>
<dbReference type="SUPFAM" id="SSF54747">
    <property type="entry name" value="Ribosomal L11/L12e N-terminal domain"/>
    <property type="match status" value="1"/>
</dbReference>
<dbReference type="SUPFAM" id="SSF46906">
    <property type="entry name" value="Ribosomal protein L11, C-terminal domain"/>
    <property type="match status" value="1"/>
</dbReference>
<dbReference type="PROSITE" id="PS00359">
    <property type="entry name" value="RIBOSOMAL_L11"/>
    <property type="match status" value="1"/>
</dbReference>
<comment type="function">
    <text evidence="1">Forms part of the ribosomal stalk which helps the ribosome interact with GTP-bound translation factors.</text>
</comment>
<comment type="subunit">
    <text evidence="1">Part of the ribosomal stalk of the 50S ribosomal subunit. Interacts with L10 and the large rRNA to form the base of the stalk. L10 forms an elongated spine to which L12 dimers bind in a sequential fashion forming a multimeric L10(L12)X complex.</text>
</comment>
<comment type="PTM">
    <text evidence="1">One or more lysine residues are methylated.</text>
</comment>
<comment type="similarity">
    <text evidence="1">Belongs to the universal ribosomal protein uL11 family.</text>
</comment>
<name>RL11_STRT1</name>
<accession>Q5LXZ5</accession>
<reference key="1">
    <citation type="journal article" date="2004" name="Nat. Biotechnol.">
        <title>Complete sequence and comparative genome analysis of the dairy bacterium Streptococcus thermophilus.</title>
        <authorList>
            <person name="Bolotin A."/>
            <person name="Quinquis B."/>
            <person name="Renault P."/>
            <person name="Sorokin A."/>
            <person name="Ehrlich S.D."/>
            <person name="Kulakauskas S."/>
            <person name="Lapidus A."/>
            <person name="Goltsman E."/>
            <person name="Mazur M."/>
            <person name="Pusch G.D."/>
            <person name="Fonstein M."/>
            <person name="Overbeek R."/>
            <person name="Kyprides N."/>
            <person name="Purnelle B."/>
            <person name="Prozzi D."/>
            <person name="Ngui K."/>
            <person name="Masuy D."/>
            <person name="Hancy F."/>
            <person name="Burteau S."/>
            <person name="Boutry M."/>
            <person name="Delcour J."/>
            <person name="Goffeau A."/>
            <person name="Hols P."/>
        </authorList>
    </citation>
    <scope>NUCLEOTIDE SEQUENCE [LARGE SCALE GENOMIC DNA]</scope>
    <source>
        <strain>CNRZ 1066</strain>
    </source>
</reference>
<sequence length="141" mass="14801">MAKKVENIVKLQIPAGKATPAPPVGPALGQAGINIMGFTKEFNARTADQAGMIIPVVISVYEDKSFDFITKTPPAAVLLKKAAGVEKGSGTPNSVKVASVTRAQVREIAETKMPDLNAANIESAMRMIEGTARSMGFTVTD</sequence>
<organism>
    <name type="scientific">Streptococcus thermophilus (strain CNRZ 1066)</name>
    <dbReference type="NCBI Taxonomy" id="299768"/>
    <lineage>
        <taxon>Bacteria</taxon>
        <taxon>Bacillati</taxon>
        <taxon>Bacillota</taxon>
        <taxon>Bacilli</taxon>
        <taxon>Lactobacillales</taxon>
        <taxon>Streptococcaceae</taxon>
        <taxon>Streptococcus</taxon>
    </lineage>
</organism>
<protein>
    <recommendedName>
        <fullName evidence="1">Large ribosomal subunit protein uL11</fullName>
    </recommendedName>
    <alternativeName>
        <fullName evidence="2">50S ribosomal protein L11</fullName>
    </alternativeName>
</protein>
<gene>
    <name evidence="1" type="primary">rplK</name>
    <name type="ordered locus">str1818</name>
</gene>
<feature type="chain" id="PRO_0000258227" description="Large ribosomal subunit protein uL11">
    <location>
        <begin position="1"/>
        <end position="141"/>
    </location>
</feature>
<evidence type="ECO:0000255" key="1">
    <source>
        <dbReference type="HAMAP-Rule" id="MF_00736"/>
    </source>
</evidence>
<evidence type="ECO:0000305" key="2"/>
<proteinExistence type="inferred from homology"/>